<proteinExistence type="inferred from homology"/>
<protein>
    <recommendedName>
        <fullName evidence="1">UPF0316 protein SSP0880</fullName>
    </recommendedName>
</protein>
<sequence length="192" mass="21775">MSVITSNPWLMVLAIFIINVAYVTCLTMRTILTLKGYRYVAAIVSFLEVLVYVVGLGMVMSSLDQIQNVFAYAFGFSIGIIVGMKIEEKLALGYTVVNVTSSEYELDLPRQLRDLGYGVTHNTAYGRDGKRLILQILTPRRFEFKLIDTIKQIDEKAFIVAYEPRQIHGGFWAKGVRSKKLKQYDTDEVESI</sequence>
<dbReference type="EMBL" id="AP008934">
    <property type="protein sequence ID" value="BAE18025.1"/>
    <property type="status" value="ALT_INIT"/>
    <property type="molecule type" value="Genomic_DNA"/>
</dbReference>
<dbReference type="RefSeq" id="WP_037538142.1">
    <property type="nucleotide sequence ID" value="NZ_MTGA01000031.1"/>
</dbReference>
<dbReference type="SMR" id="Q49YV5"/>
<dbReference type="KEGG" id="ssp:SSP0880"/>
<dbReference type="eggNOG" id="COG4843">
    <property type="taxonomic scope" value="Bacteria"/>
</dbReference>
<dbReference type="HOGENOM" id="CLU_106166_1_0_9"/>
<dbReference type="OrthoDB" id="48231at2"/>
<dbReference type="Proteomes" id="UP000006371">
    <property type="component" value="Chromosome"/>
</dbReference>
<dbReference type="GO" id="GO:0005886">
    <property type="term" value="C:plasma membrane"/>
    <property type="evidence" value="ECO:0007669"/>
    <property type="project" value="UniProtKB-SubCell"/>
</dbReference>
<dbReference type="CDD" id="cd16381">
    <property type="entry name" value="YitT_C_like_1"/>
    <property type="match status" value="1"/>
</dbReference>
<dbReference type="HAMAP" id="MF_01515">
    <property type="entry name" value="UPF0316"/>
    <property type="match status" value="1"/>
</dbReference>
<dbReference type="InterPro" id="IPR019264">
    <property type="entry name" value="DUF2179"/>
</dbReference>
<dbReference type="InterPro" id="IPR044035">
    <property type="entry name" value="DUF5698"/>
</dbReference>
<dbReference type="InterPro" id="IPR022930">
    <property type="entry name" value="UPF0316"/>
</dbReference>
<dbReference type="NCBIfam" id="NF003190">
    <property type="entry name" value="PRK04164.1-1"/>
    <property type="match status" value="1"/>
</dbReference>
<dbReference type="NCBIfam" id="NF003194">
    <property type="entry name" value="PRK04164.1-5"/>
    <property type="match status" value="1"/>
</dbReference>
<dbReference type="PANTHER" id="PTHR40060">
    <property type="entry name" value="UPF0316 PROTEIN YEBE"/>
    <property type="match status" value="1"/>
</dbReference>
<dbReference type="PANTHER" id="PTHR40060:SF1">
    <property type="entry name" value="UPF0316 PROTEIN YEBE"/>
    <property type="match status" value="1"/>
</dbReference>
<dbReference type="Pfam" id="PF10035">
    <property type="entry name" value="DUF2179"/>
    <property type="match status" value="1"/>
</dbReference>
<dbReference type="Pfam" id="PF18955">
    <property type="entry name" value="DUF5698"/>
    <property type="match status" value="1"/>
</dbReference>
<gene>
    <name type="ordered locus">SSP0880</name>
</gene>
<keyword id="KW-1003">Cell membrane</keyword>
<keyword id="KW-0472">Membrane</keyword>
<keyword id="KW-1185">Reference proteome</keyword>
<keyword id="KW-0812">Transmembrane</keyword>
<keyword id="KW-1133">Transmembrane helix</keyword>
<comment type="subcellular location">
    <subcellularLocation>
        <location evidence="1">Cell membrane</location>
        <topology evidence="1">Multi-pass membrane protein</topology>
    </subcellularLocation>
</comment>
<comment type="similarity">
    <text evidence="1">Belongs to the UPF0316 family.</text>
</comment>
<comment type="sequence caution" evidence="2">
    <conflict type="erroneous initiation">
        <sequence resource="EMBL-CDS" id="BAE18025"/>
    </conflict>
</comment>
<accession>Q49YV5</accession>
<feature type="chain" id="PRO_0000171959" description="UPF0316 protein SSP0880">
    <location>
        <begin position="1"/>
        <end position="192"/>
    </location>
</feature>
<feature type="transmembrane region" description="Helical" evidence="1">
    <location>
        <begin position="8"/>
        <end position="28"/>
    </location>
</feature>
<feature type="transmembrane region" description="Helical" evidence="1">
    <location>
        <begin position="40"/>
        <end position="60"/>
    </location>
</feature>
<feature type="transmembrane region" description="Helical" evidence="1">
    <location>
        <begin position="66"/>
        <end position="86"/>
    </location>
</feature>
<evidence type="ECO:0000255" key="1">
    <source>
        <dbReference type="HAMAP-Rule" id="MF_01515"/>
    </source>
</evidence>
<evidence type="ECO:0000305" key="2"/>
<organism>
    <name type="scientific">Staphylococcus saprophyticus subsp. saprophyticus (strain ATCC 15305 / DSM 20229 / NCIMB 8711 / NCTC 7292 / S-41)</name>
    <dbReference type="NCBI Taxonomy" id="342451"/>
    <lineage>
        <taxon>Bacteria</taxon>
        <taxon>Bacillati</taxon>
        <taxon>Bacillota</taxon>
        <taxon>Bacilli</taxon>
        <taxon>Bacillales</taxon>
        <taxon>Staphylococcaceae</taxon>
        <taxon>Staphylococcus</taxon>
    </lineage>
</organism>
<name>Y880_STAS1</name>
<reference key="1">
    <citation type="journal article" date="2005" name="Proc. Natl. Acad. Sci. U.S.A.">
        <title>Whole genome sequence of Staphylococcus saprophyticus reveals the pathogenesis of uncomplicated urinary tract infection.</title>
        <authorList>
            <person name="Kuroda M."/>
            <person name="Yamashita A."/>
            <person name="Hirakawa H."/>
            <person name="Kumano M."/>
            <person name="Morikawa K."/>
            <person name="Higashide M."/>
            <person name="Maruyama A."/>
            <person name="Inose Y."/>
            <person name="Matoba K."/>
            <person name="Toh H."/>
            <person name="Kuhara S."/>
            <person name="Hattori M."/>
            <person name="Ohta T."/>
        </authorList>
    </citation>
    <scope>NUCLEOTIDE SEQUENCE [LARGE SCALE GENOMIC DNA]</scope>
    <source>
        <strain>ATCC 15305 / DSM 20229 / NCIMB 8711 / NCTC 7292 / S-41</strain>
    </source>
</reference>